<feature type="chain" id="PRO_0000104302" description="Large ribosomal subunit protein uL11">
    <location>
        <begin position="1"/>
        <end position="144"/>
    </location>
</feature>
<reference key="1">
    <citation type="journal article" date="2004" name="Nat. Genet.">
        <title>Evidence in the Legionella pneumophila genome for exploitation of host cell functions and high genome plasticity.</title>
        <authorList>
            <person name="Cazalet C."/>
            <person name="Rusniok C."/>
            <person name="Brueggemann H."/>
            <person name="Zidane N."/>
            <person name="Magnier A."/>
            <person name="Ma L."/>
            <person name="Tichit M."/>
            <person name="Jarraud S."/>
            <person name="Bouchier C."/>
            <person name="Vandenesch F."/>
            <person name="Kunst F."/>
            <person name="Etienne J."/>
            <person name="Glaser P."/>
            <person name="Buchrieser C."/>
        </authorList>
    </citation>
    <scope>NUCLEOTIDE SEQUENCE [LARGE SCALE GENOMIC DNA]</scope>
    <source>
        <strain>Paris</strain>
    </source>
</reference>
<proteinExistence type="inferred from homology"/>
<dbReference type="EMBL" id="CR628336">
    <property type="protein sequence ID" value="CAH11531.1"/>
    <property type="molecule type" value="Genomic_DNA"/>
</dbReference>
<dbReference type="RefSeq" id="WP_010946069.1">
    <property type="nucleotide sequence ID" value="NC_006368.1"/>
</dbReference>
<dbReference type="SMR" id="Q5X870"/>
<dbReference type="GeneID" id="57034321"/>
<dbReference type="KEGG" id="lpp:lpp0383"/>
<dbReference type="LegioList" id="lpp0383"/>
<dbReference type="HOGENOM" id="CLU_074237_2_0_6"/>
<dbReference type="GO" id="GO:0022625">
    <property type="term" value="C:cytosolic large ribosomal subunit"/>
    <property type="evidence" value="ECO:0007669"/>
    <property type="project" value="TreeGrafter"/>
</dbReference>
<dbReference type="GO" id="GO:0070180">
    <property type="term" value="F:large ribosomal subunit rRNA binding"/>
    <property type="evidence" value="ECO:0007669"/>
    <property type="project" value="UniProtKB-UniRule"/>
</dbReference>
<dbReference type="GO" id="GO:0003735">
    <property type="term" value="F:structural constituent of ribosome"/>
    <property type="evidence" value="ECO:0007669"/>
    <property type="project" value="InterPro"/>
</dbReference>
<dbReference type="GO" id="GO:0006412">
    <property type="term" value="P:translation"/>
    <property type="evidence" value="ECO:0007669"/>
    <property type="project" value="UniProtKB-UniRule"/>
</dbReference>
<dbReference type="CDD" id="cd00349">
    <property type="entry name" value="Ribosomal_L11"/>
    <property type="match status" value="1"/>
</dbReference>
<dbReference type="FunFam" id="1.10.10.250:FF:000001">
    <property type="entry name" value="50S ribosomal protein L11"/>
    <property type="match status" value="1"/>
</dbReference>
<dbReference type="FunFam" id="3.30.1550.10:FF:000001">
    <property type="entry name" value="50S ribosomal protein L11"/>
    <property type="match status" value="1"/>
</dbReference>
<dbReference type="Gene3D" id="1.10.10.250">
    <property type="entry name" value="Ribosomal protein L11, C-terminal domain"/>
    <property type="match status" value="1"/>
</dbReference>
<dbReference type="Gene3D" id="3.30.1550.10">
    <property type="entry name" value="Ribosomal protein L11/L12, N-terminal domain"/>
    <property type="match status" value="1"/>
</dbReference>
<dbReference type="HAMAP" id="MF_00736">
    <property type="entry name" value="Ribosomal_uL11"/>
    <property type="match status" value="1"/>
</dbReference>
<dbReference type="InterPro" id="IPR000911">
    <property type="entry name" value="Ribosomal_uL11"/>
</dbReference>
<dbReference type="InterPro" id="IPR006519">
    <property type="entry name" value="Ribosomal_uL11_bac-typ"/>
</dbReference>
<dbReference type="InterPro" id="IPR020783">
    <property type="entry name" value="Ribosomal_uL11_C"/>
</dbReference>
<dbReference type="InterPro" id="IPR036769">
    <property type="entry name" value="Ribosomal_uL11_C_sf"/>
</dbReference>
<dbReference type="InterPro" id="IPR020785">
    <property type="entry name" value="Ribosomal_uL11_CS"/>
</dbReference>
<dbReference type="InterPro" id="IPR020784">
    <property type="entry name" value="Ribosomal_uL11_N"/>
</dbReference>
<dbReference type="InterPro" id="IPR036796">
    <property type="entry name" value="Ribosomal_uL11_N_sf"/>
</dbReference>
<dbReference type="NCBIfam" id="TIGR01632">
    <property type="entry name" value="L11_bact"/>
    <property type="match status" value="1"/>
</dbReference>
<dbReference type="PANTHER" id="PTHR11661">
    <property type="entry name" value="60S RIBOSOMAL PROTEIN L12"/>
    <property type="match status" value="1"/>
</dbReference>
<dbReference type="PANTHER" id="PTHR11661:SF1">
    <property type="entry name" value="LARGE RIBOSOMAL SUBUNIT PROTEIN UL11M"/>
    <property type="match status" value="1"/>
</dbReference>
<dbReference type="Pfam" id="PF00298">
    <property type="entry name" value="Ribosomal_L11"/>
    <property type="match status" value="1"/>
</dbReference>
<dbReference type="Pfam" id="PF03946">
    <property type="entry name" value="Ribosomal_L11_N"/>
    <property type="match status" value="1"/>
</dbReference>
<dbReference type="SMART" id="SM00649">
    <property type="entry name" value="RL11"/>
    <property type="match status" value="1"/>
</dbReference>
<dbReference type="SUPFAM" id="SSF54747">
    <property type="entry name" value="Ribosomal L11/L12e N-terminal domain"/>
    <property type="match status" value="1"/>
</dbReference>
<dbReference type="SUPFAM" id="SSF46906">
    <property type="entry name" value="Ribosomal protein L11, C-terminal domain"/>
    <property type="match status" value="1"/>
</dbReference>
<dbReference type="PROSITE" id="PS00359">
    <property type="entry name" value="RIBOSOMAL_L11"/>
    <property type="match status" value="1"/>
</dbReference>
<organism>
    <name type="scientific">Legionella pneumophila (strain Paris)</name>
    <dbReference type="NCBI Taxonomy" id="297246"/>
    <lineage>
        <taxon>Bacteria</taxon>
        <taxon>Pseudomonadati</taxon>
        <taxon>Pseudomonadota</taxon>
        <taxon>Gammaproteobacteria</taxon>
        <taxon>Legionellales</taxon>
        <taxon>Legionellaceae</taxon>
        <taxon>Legionella</taxon>
    </lineage>
</organism>
<sequence>MAKKVEAYIKLQIPAGKANPSPPVGPALGQRGVNIMEFCKAFNAATQQMEQGLPIPVVITVYSDRSFTFITKTPPASVLLKKAAGIQSGSGTPNTKKVAKLNVSQLEEIAKVKKPDLTAADLAAAVRSIAGTARSMGIEVEGLE</sequence>
<accession>Q5X870</accession>
<gene>
    <name evidence="1" type="primary">rplK</name>
    <name type="ordered locus">lpp0383</name>
</gene>
<keyword id="KW-0488">Methylation</keyword>
<keyword id="KW-0687">Ribonucleoprotein</keyword>
<keyword id="KW-0689">Ribosomal protein</keyword>
<keyword id="KW-0694">RNA-binding</keyword>
<keyword id="KW-0699">rRNA-binding</keyword>
<protein>
    <recommendedName>
        <fullName evidence="1">Large ribosomal subunit protein uL11</fullName>
    </recommendedName>
    <alternativeName>
        <fullName evidence="2">50S ribosomal protein L11</fullName>
    </alternativeName>
</protein>
<comment type="function">
    <text evidence="1">Forms part of the ribosomal stalk which helps the ribosome interact with GTP-bound translation factors.</text>
</comment>
<comment type="subunit">
    <text evidence="1">Part of the ribosomal stalk of the 50S ribosomal subunit. Interacts with L10 and the large rRNA to form the base of the stalk. L10 forms an elongated spine to which L12 dimers bind in a sequential fashion forming a multimeric L10(L12)X complex.</text>
</comment>
<comment type="PTM">
    <text evidence="1">One or more lysine residues are methylated.</text>
</comment>
<comment type="similarity">
    <text evidence="1">Belongs to the universal ribosomal protein uL11 family.</text>
</comment>
<name>RL11_LEGPA</name>
<evidence type="ECO:0000255" key="1">
    <source>
        <dbReference type="HAMAP-Rule" id="MF_00736"/>
    </source>
</evidence>
<evidence type="ECO:0000305" key="2"/>